<organism>
    <name type="scientific">Taeniopygia guttata</name>
    <name type="common">Zebra finch</name>
    <name type="synonym">Poephila guttata</name>
    <dbReference type="NCBI Taxonomy" id="59729"/>
    <lineage>
        <taxon>Eukaryota</taxon>
        <taxon>Metazoa</taxon>
        <taxon>Chordata</taxon>
        <taxon>Craniata</taxon>
        <taxon>Vertebrata</taxon>
        <taxon>Euteleostomi</taxon>
        <taxon>Archelosauria</taxon>
        <taxon>Archosauria</taxon>
        <taxon>Dinosauria</taxon>
        <taxon>Saurischia</taxon>
        <taxon>Theropoda</taxon>
        <taxon>Coelurosauria</taxon>
        <taxon>Aves</taxon>
        <taxon>Neognathae</taxon>
        <taxon>Neoaves</taxon>
        <taxon>Telluraves</taxon>
        <taxon>Australaves</taxon>
        <taxon>Passeriformes</taxon>
        <taxon>Passeroidea</taxon>
        <taxon>Estrildidae</taxon>
        <taxon>Estrildinae</taxon>
        <taxon>Taeniopygia</taxon>
    </lineage>
</organism>
<protein>
    <recommendedName>
        <fullName>Estrogen receptor</fullName>
        <shortName>ER</shortName>
    </recommendedName>
    <alternativeName>
        <fullName>ER-alpha</fullName>
    </alternativeName>
    <alternativeName>
        <fullName>Estradiol receptor</fullName>
    </alternativeName>
    <alternativeName>
        <fullName>Nuclear receptor subfamily 3 group A member 1</fullName>
    </alternativeName>
</protein>
<comment type="function">
    <text>The steroid hormones and their receptors are involved in the regulation of eukaryotic gene expression and affect cellular proliferation and differentiation in target tissues.</text>
</comment>
<comment type="subunit">
    <text evidence="1">Binds DNA as a homodimer. Can form a heterodimer with ER-beta (By similarity).</text>
</comment>
<comment type="subcellular location">
    <subcellularLocation>
        <location>Nucleus</location>
    </subcellularLocation>
</comment>
<comment type="domain">
    <text evidence="1">Composed of three domains: a modulating N-terminal domain, a DNA-binding domain and a C-terminal ligand-binding domain. The modulating domain, also known as A/B or AF-1 domain has a ligand-independent transactivation function. The C-terminus contains a ligand-dependent transactivation domain, also known as E/F or AF-2 domain which overlaps with the ligand binding domain. AF-1 and AF-2 activate transcription independently and synergistically and act in a promoter- and cell-specific manner (By similarity).</text>
</comment>
<comment type="similarity">
    <text evidence="5">Belongs to the nuclear hormone receptor family. NR3 subfamily.</text>
</comment>
<accession>Q91250</accession>
<dbReference type="EMBL" id="L79911">
    <property type="protein sequence ID" value="AAB81108.1"/>
    <property type="molecule type" value="mRNA"/>
</dbReference>
<dbReference type="RefSeq" id="NP_001070169.1">
    <property type="nucleotide sequence ID" value="NM_001076701.1"/>
</dbReference>
<dbReference type="SMR" id="Q91250"/>
<dbReference type="STRING" id="59729.ENSTGUP00000011604"/>
<dbReference type="GeneID" id="751998"/>
<dbReference type="KEGG" id="tgu:751998"/>
<dbReference type="CTD" id="2099"/>
<dbReference type="InParanoid" id="Q91250"/>
<dbReference type="OrthoDB" id="5799427at2759"/>
<dbReference type="Proteomes" id="UP000007754">
    <property type="component" value="Unplaced"/>
</dbReference>
<dbReference type="GO" id="GO:0005737">
    <property type="term" value="C:cytoplasm"/>
    <property type="evidence" value="ECO:0000250"/>
    <property type="project" value="UniProtKB"/>
</dbReference>
<dbReference type="GO" id="GO:0005634">
    <property type="term" value="C:nucleus"/>
    <property type="evidence" value="ECO:0000250"/>
    <property type="project" value="UniProtKB"/>
</dbReference>
<dbReference type="GO" id="GO:0030284">
    <property type="term" value="F:nuclear estrogen receptor activity"/>
    <property type="evidence" value="ECO:0000250"/>
    <property type="project" value="AgBase"/>
</dbReference>
<dbReference type="GO" id="GO:0043565">
    <property type="term" value="F:sequence-specific DNA binding"/>
    <property type="evidence" value="ECO:0007669"/>
    <property type="project" value="InterPro"/>
</dbReference>
<dbReference type="GO" id="GO:0005496">
    <property type="term" value="F:steroid binding"/>
    <property type="evidence" value="ECO:0007669"/>
    <property type="project" value="UniProtKB-KW"/>
</dbReference>
<dbReference type="GO" id="GO:0008270">
    <property type="term" value="F:zinc ion binding"/>
    <property type="evidence" value="ECO:0007669"/>
    <property type="project" value="UniProtKB-KW"/>
</dbReference>
<dbReference type="GO" id="GO:0055001">
    <property type="term" value="P:muscle cell development"/>
    <property type="evidence" value="ECO:0000315"/>
    <property type="project" value="AgBase"/>
</dbReference>
<dbReference type="GO" id="GO:0010628">
    <property type="term" value="P:positive regulation of gene expression"/>
    <property type="evidence" value="ECO:0000250"/>
    <property type="project" value="AgBase"/>
</dbReference>
<dbReference type="CDD" id="cd07171">
    <property type="entry name" value="NR_DBD_ER"/>
    <property type="match status" value="1"/>
</dbReference>
<dbReference type="CDD" id="cd06949">
    <property type="entry name" value="NR_LBD_ER"/>
    <property type="match status" value="1"/>
</dbReference>
<dbReference type="FunFam" id="1.10.565.10:FF:000010">
    <property type="entry name" value="Estrogen receptor"/>
    <property type="match status" value="1"/>
</dbReference>
<dbReference type="FunFam" id="3.30.50.10:FF:000014">
    <property type="entry name" value="Estrogen receptor beta"/>
    <property type="match status" value="1"/>
</dbReference>
<dbReference type="Gene3D" id="3.30.50.10">
    <property type="entry name" value="Erythroid Transcription Factor GATA-1, subunit A"/>
    <property type="match status" value="1"/>
</dbReference>
<dbReference type="Gene3D" id="1.10.565.10">
    <property type="entry name" value="Retinoid X Receptor"/>
    <property type="match status" value="1"/>
</dbReference>
<dbReference type="InterPro" id="IPR024178">
    <property type="entry name" value="Est_rcpt/est-rel_rcp"/>
</dbReference>
<dbReference type="InterPro" id="IPR001292">
    <property type="entry name" value="Estr_rcpt"/>
</dbReference>
<dbReference type="InterPro" id="IPR046944">
    <property type="entry name" value="Estr_rcpt_N"/>
</dbReference>
<dbReference type="InterPro" id="IPR035500">
    <property type="entry name" value="NHR-like_dom_sf"/>
</dbReference>
<dbReference type="InterPro" id="IPR000536">
    <property type="entry name" value="Nucl_hrmn_rcpt_lig-bd"/>
</dbReference>
<dbReference type="InterPro" id="IPR050200">
    <property type="entry name" value="Nuclear_hormone_rcpt_NR3"/>
</dbReference>
<dbReference type="InterPro" id="IPR001723">
    <property type="entry name" value="Nuclear_hrmn_rcpt"/>
</dbReference>
<dbReference type="InterPro" id="IPR024736">
    <property type="entry name" value="Oestrogen-typ_rcpt_final_C_dom"/>
</dbReference>
<dbReference type="InterPro" id="IPR001628">
    <property type="entry name" value="Znf_hrmn_rcpt"/>
</dbReference>
<dbReference type="InterPro" id="IPR013088">
    <property type="entry name" value="Znf_NHR/GATA"/>
</dbReference>
<dbReference type="PANTHER" id="PTHR48092">
    <property type="entry name" value="KNIRPS-RELATED PROTEIN-RELATED"/>
    <property type="match status" value="1"/>
</dbReference>
<dbReference type="Pfam" id="PF12743">
    <property type="entry name" value="ESR1_C"/>
    <property type="match status" value="1"/>
</dbReference>
<dbReference type="Pfam" id="PF00104">
    <property type="entry name" value="Hormone_recep"/>
    <property type="match status" value="1"/>
</dbReference>
<dbReference type="Pfam" id="PF02159">
    <property type="entry name" value="Oest_recep"/>
    <property type="match status" value="1"/>
</dbReference>
<dbReference type="Pfam" id="PF00105">
    <property type="entry name" value="zf-C4"/>
    <property type="match status" value="1"/>
</dbReference>
<dbReference type="PIRSF" id="PIRSF500101">
    <property type="entry name" value="ER-a"/>
    <property type="match status" value="1"/>
</dbReference>
<dbReference type="PIRSF" id="PIRSF002527">
    <property type="entry name" value="ER-like_NR"/>
    <property type="match status" value="1"/>
</dbReference>
<dbReference type="PRINTS" id="PR00543">
    <property type="entry name" value="OESTROGENR"/>
</dbReference>
<dbReference type="PRINTS" id="PR00398">
    <property type="entry name" value="STRDHORMONER"/>
</dbReference>
<dbReference type="PRINTS" id="PR00047">
    <property type="entry name" value="STROIDFINGER"/>
</dbReference>
<dbReference type="SMART" id="SM00430">
    <property type="entry name" value="HOLI"/>
    <property type="match status" value="1"/>
</dbReference>
<dbReference type="SMART" id="SM00399">
    <property type="entry name" value="ZnF_C4"/>
    <property type="match status" value="1"/>
</dbReference>
<dbReference type="SUPFAM" id="SSF57716">
    <property type="entry name" value="Glucocorticoid receptor-like (DNA-binding domain)"/>
    <property type="match status" value="1"/>
</dbReference>
<dbReference type="SUPFAM" id="SSF48508">
    <property type="entry name" value="Nuclear receptor ligand-binding domain"/>
    <property type="match status" value="1"/>
</dbReference>
<dbReference type="PROSITE" id="PS51843">
    <property type="entry name" value="NR_LBD"/>
    <property type="match status" value="1"/>
</dbReference>
<dbReference type="PROSITE" id="PS00031">
    <property type="entry name" value="NUCLEAR_REC_DBD_1"/>
    <property type="match status" value="1"/>
</dbReference>
<dbReference type="PROSITE" id="PS51030">
    <property type="entry name" value="NUCLEAR_REC_DBD_2"/>
    <property type="match status" value="1"/>
</dbReference>
<sequence length="587" mass="66553">MTLHTKTSGVTLLHQIQGTELETLSRPQLKIPLERSLSDMYVETNKTGVFNYPEGATYDFGTTAPVYSSTTLSYAPTSESFGSSSLAGFHSLNSVPPSPVVFLQTAPHWSPFIHHHSQQVPYYLENDQGSFGMREAAPPAFYRPNSDNRRHSIRERMSSANEKGSLSMESTKETRYCAVCNDYASGYHYGVWSCEGCKAFFKRSIQGHNDYMCPATNQCTIDKNRRKSCQACRLRKCYEVGMMKGGIRKDRRGGRVMKQKRQREEQDSRNGEASSTELRAPTLWASPLVVKHNKKNSPALSLTAEQMVSALLEAEPPLVYSEYDPNRPFNEASMMTLLTNLADRELVHMINWAKRVPGFVDLTLHDQVHLLECAWLEILMIGLVWRSMEHPGKLLFAPNLLLDRNQGKCVEGMVEIFDMLLATAARFRMMNLQGEEFVCLKSIILLNSGVYTFLSSTLKSLEEKDYIHRVLDKITDTLIHLMAKSGLSLQQQHRRLAQLLLILSHIRHMSNKGMEHLYNMKCKNVVPLYDLLLEMLDAHRLHAPAARSAAPMEEENRSQLTTASASSHSLQSFYINSKEEENMQNTL</sequence>
<keyword id="KW-0238">DNA-binding</keyword>
<keyword id="KW-0446">Lipid-binding</keyword>
<keyword id="KW-0479">Metal-binding</keyword>
<keyword id="KW-0539">Nucleus</keyword>
<keyword id="KW-0675">Receptor</keyword>
<keyword id="KW-1185">Reference proteome</keyword>
<keyword id="KW-0754">Steroid-binding</keyword>
<keyword id="KW-0804">Transcription</keyword>
<keyword id="KW-0805">Transcription regulation</keyword>
<keyword id="KW-0862">Zinc</keyword>
<keyword id="KW-0863">Zinc-finger</keyword>
<gene>
    <name type="primary">ESR1</name>
    <name type="synonym">ESR</name>
    <name type="synonym">NR3A1</name>
</gene>
<evidence type="ECO:0000250" key="1"/>
<evidence type="ECO:0000255" key="2">
    <source>
        <dbReference type="PROSITE-ProRule" id="PRU00407"/>
    </source>
</evidence>
<evidence type="ECO:0000255" key="3">
    <source>
        <dbReference type="PROSITE-ProRule" id="PRU01189"/>
    </source>
</evidence>
<evidence type="ECO:0000256" key="4">
    <source>
        <dbReference type="SAM" id="MobiDB-lite"/>
    </source>
</evidence>
<evidence type="ECO:0000305" key="5"/>
<proteinExistence type="evidence at transcript level"/>
<reference key="1">
    <citation type="journal article" date="1996" name="J. Steroid Biochem. Mol. Biol.">
        <title>Zebra finch estrogen receptor cDNA: cloning and mRNA expression.</title>
        <authorList>
            <person name="Jacobs E.C."/>
            <person name="Arnold A.P."/>
            <person name="Campagnoni A.T."/>
        </authorList>
    </citation>
    <scope>NUCLEOTIDE SEQUENCE [MRNA]</scope>
    <source>
        <tissue>Hypothalamus</tissue>
    </source>
</reference>
<name>ESR1_TAEGU</name>
<feature type="chain" id="PRO_0000053636" description="Estrogen receptor">
    <location>
        <begin position="1"/>
        <end position="587"/>
    </location>
</feature>
<feature type="domain" description="NR LBD" evidence="3">
    <location>
        <begin position="303"/>
        <end position="539"/>
    </location>
</feature>
<feature type="DNA-binding region" description="Nuclear receptor" evidence="2">
    <location>
        <begin position="177"/>
        <end position="242"/>
    </location>
</feature>
<feature type="zinc finger region" description="NR C4-type" evidence="2">
    <location>
        <begin position="177"/>
        <end position="197"/>
    </location>
</feature>
<feature type="zinc finger region" description="NR C4-type" evidence="2">
    <location>
        <begin position="213"/>
        <end position="237"/>
    </location>
</feature>
<feature type="region of interest" description="Modulating (transactivation AF-1)">
    <location>
        <begin position="1"/>
        <end position="176"/>
    </location>
</feature>
<feature type="region of interest" description="Hinge">
    <location>
        <begin position="243"/>
        <end position="302"/>
    </location>
</feature>
<feature type="region of interest" description="Disordered" evidence="4">
    <location>
        <begin position="248"/>
        <end position="277"/>
    </location>
</feature>
<feature type="region of interest" description="Transactivation AF-2" evidence="1">
    <location>
        <begin position="303"/>
        <end position="587"/>
    </location>
</feature>
<feature type="compositionally biased region" description="Basic residues" evidence="4">
    <location>
        <begin position="249"/>
        <end position="261"/>
    </location>
</feature>